<gene>
    <name type="primary">NAS5</name>
</gene>
<protein>
    <recommendedName>
        <fullName>Nicotianamine synthase-like 5 protein</fullName>
    </recommendedName>
    <alternativeName>
        <fullName>HvNAS5</fullName>
    </alternativeName>
</protein>
<proteinExistence type="evidence at protein level"/>
<reference key="1">
    <citation type="journal article" date="1999" name="Plant Physiol.">
        <title>Cloning of nicotianamine synthase genes, novel genes involved in the biosynthesis of phytosiderophores.</title>
        <authorList>
            <person name="Higuchi K."/>
            <person name="Suzuki K."/>
            <person name="Nakanishi H."/>
            <person name="Yamaguchi H."/>
            <person name="Nishizawa N.-K."/>
            <person name="Mori S."/>
        </authorList>
    </citation>
    <scope>NUCLEOTIDE SEQUENCE [MRNA]</scope>
    <scope>PROTEIN SEQUENCE OF 180-198 AND 224-252</scope>
    <source>
        <strain>cv. Ehimehadaka No.1</strain>
        <tissue>Root</tissue>
    </source>
</reference>
<name>NAS5_HORVU</name>
<sequence length="282" mass="30149">MEAENGEVAALVEKITGLHAAISKLPALSPSPQVDALFTELVAACVPSSPVDVTKLGPEAQEMRQDLIRLCSAAEGLLEAHYSDMLTALDSPLDHLGRFPYFDNYVNLSKLEHDLLAGHVAAPARVAFIGSGPLPFSSLFLATYHLPDTRFDNYDRCSVANGRAMKLVGAADEGVRSRMAFHTAEVTDLTAELGAYDVVFLAALVGMTSKEKADAIAHLGKHMADGAVLVREALHGARAFLYPVVELDDVGRGGFQVLAVHHPAGDEVFNSFIVARKVKMSA</sequence>
<dbReference type="EMBL" id="AB011268">
    <property type="protein sequence ID" value="BAA74585.1"/>
    <property type="molecule type" value="mRNA"/>
</dbReference>
<dbReference type="EMBL" id="AB011267">
    <property type="protein sequence ID" value="BAA74584.1"/>
    <property type="status" value="ALT_FRAME"/>
    <property type="molecule type" value="mRNA"/>
</dbReference>
<dbReference type="SMR" id="Q9ZQV4"/>
<dbReference type="ExpressionAtlas" id="Q9ZQV4">
    <property type="expression patterns" value="baseline and differential"/>
</dbReference>
<dbReference type="GO" id="GO:0030410">
    <property type="term" value="F:nicotianamine synthase activity"/>
    <property type="evidence" value="ECO:0007669"/>
    <property type="project" value="InterPro"/>
</dbReference>
<dbReference type="GO" id="GO:0030418">
    <property type="term" value="P:nicotianamine biosynthetic process"/>
    <property type="evidence" value="ECO:0007669"/>
    <property type="project" value="InterPro"/>
</dbReference>
<dbReference type="Gene3D" id="3.40.50.150">
    <property type="entry name" value="Vaccinia Virus protein VP39"/>
    <property type="match status" value="1"/>
</dbReference>
<dbReference type="InterPro" id="IPR004298">
    <property type="entry name" value="Nicotian_synth"/>
</dbReference>
<dbReference type="InterPro" id="IPR029063">
    <property type="entry name" value="SAM-dependent_MTases_sf"/>
</dbReference>
<dbReference type="PANTHER" id="PTHR32266:SF21">
    <property type="entry name" value="NICOTIANAMINE SYNTHASE"/>
    <property type="match status" value="1"/>
</dbReference>
<dbReference type="PANTHER" id="PTHR32266">
    <property type="entry name" value="NICOTIANAMINE SYNTHASE 3"/>
    <property type="match status" value="1"/>
</dbReference>
<dbReference type="Pfam" id="PF03059">
    <property type="entry name" value="NAS"/>
    <property type="match status" value="1"/>
</dbReference>
<dbReference type="SUPFAM" id="SSF53335">
    <property type="entry name" value="S-adenosyl-L-methionine-dependent methyltransferases"/>
    <property type="match status" value="1"/>
</dbReference>
<dbReference type="PROSITE" id="PS51142">
    <property type="entry name" value="NAS"/>
    <property type="match status" value="1"/>
</dbReference>
<keyword id="KW-0903">Direct protein sequencing</keyword>
<evidence type="ECO:0000305" key="1"/>
<accession>Q9ZQV4</accession>
<accession>Q9ZQV5</accession>
<comment type="miscellaneous">
    <text>Homologous to nicotianamine synthase, but without enzymatic activity.</text>
</comment>
<comment type="similarity">
    <text evidence="1">Belongs to the nicotianamine synthase (NAS)-like family.</text>
</comment>
<comment type="caution">
    <text evidence="1">Two forms of this protein have been cloned (NAS5-1 and NAS5-2) which seem to be identical with the exception of a 15 amino acids deletion.</text>
</comment>
<comment type="sequence caution" evidence="1">
    <conflict type="frameshift">
        <sequence resource="EMBL-CDS" id="BAA74584"/>
    </conflict>
</comment>
<organism>
    <name type="scientific">Hordeum vulgare</name>
    <name type="common">Barley</name>
    <dbReference type="NCBI Taxonomy" id="4513"/>
    <lineage>
        <taxon>Eukaryota</taxon>
        <taxon>Viridiplantae</taxon>
        <taxon>Streptophyta</taxon>
        <taxon>Embryophyta</taxon>
        <taxon>Tracheophyta</taxon>
        <taxon>Spermatophyta</taxon>
        <taxon>Magnoliopsida</taxon>
        <taxon>Liliopsida</taxon>
        <taxon>Poales</taxon>
        <taxon>Poaceae</taxon>
        <taxon>BOP clade</taxon>
        <taxon>Pooideae</taxon>
        <taxon>Triticodae</taxon>
        <taxon>Triticeae</taxon>
        <taxon>Hordeinae</taxon>
        <taxon>Hordeum</taxon>
    </lineage>
</organism>
<feature type="chain" id="PRO_0000212708" description="Nicotianamine synthase-like 5 protein">
    <location>
        <begin position="1"/>
        <end position="282"/>
    </location>
</feature>
<feature type="sequence conflict" description="In Ref. 1; BAA74584." evidence="1" ref="1">
    <original>VAAPARVAFIGSGPLP</original>
    <variation>W</variation>
    <location>
        <begin position="120"/>
        <end position="135"/>
    </location>
</feature>
<feature type="sequence conflict" description="In Ref. 1; BAA74584." evidence="1" ref="1">
    <original>VREAL</original>
    <variation>RARSA</variation>
    <location>
        <begin position="230"/>
        <end position="234"/>
    </location>
</feature>